<organism>
    <name type="scientific">Synechococcus sp. (strain ATCC 27144 / PCC 6301 / SAUG 1402/1)</name>
    <name type="common">Anacystis nidulans</name>
    <dbReference type="NCBI Taxonomy" id="269084"/>
    <lineage>
        <taxon>Bacteria</taxon>
        <taxon>Bacillati</taxon>
        <taxon>Cyanobacteriota</taxon>
        <taxon>Cyanophyceae</taxon>
        <taxon>Synechococcales</taxon>
        <taxon>Synechococcaceae</taxon>
        <taxon>Synechococcus</taxon>
    </lineage>
</organism>
<accession>Q5N0T7</accession>
<gene>
    <name evidence="1" type="primary">rpmE</name>
    <name evidence="1" type="synonym">rpl31</name>
    <name type="ordered locus">syc1893_d</name>
</gene>
<sequence>MPKADIHPQWYPEAKVYCNGEEVMTVGSTQPELHVDVWSGNHPFYTGTQKIIDTEGRVERFLRKYGMLEGDQAKSEA</sequence>
<keyword id="KW-0687">Ribonucleoprotein</keyword>
<keyword id="KW-0689">Ribosomal protein</keyword>
<keyword id="KW-0694">RNA-binding</keyword>
<keyword id="KW-0699">rRNA-binding</keyword>
<dbReference type="EMBL" id="AP008231">
    <property type="protein sequence ID" value="BAD80083.1"/>
    <property type="molecule type" value="Genomic_DNA"/>
</dbReference>
<dbReference type="RefSeq" id="WP_011244203.1">
    <property type="nucleotide sequence ID" value="NZ_CP085785.1"/>
</dbReference>
<dbReference type="GeneID" id="72431087"/>
<dbReference type="KEGG" id="syc:syc1893_d"/>
<dbReference type="eggNOG" id="COG0254">
    <property type="taxonomic scope" value="Bacteria"/>
</dbReference>
<dbReference type="Proteomes" id="UP000001175">
    <property type="component" value="Chromosome"/>
</dbReference>
<dbReference type="GO" id="GO:1990904">
    <property type="term" value="C:ribonucleoprotein complex"/>
    <property type="evidence" value="ECO:0007669"/>
    <property type="project" value="UniProtKB-KW"/>
</dbReference>
<dbReference type="GO" id="GO:0005840">
    <property type="term" value="C:ribosome"/>
    <property type="evidence" value="ECO:0007669"/>
    <property type="project" value="UniProtKB-KW"/>
</dbReference>
<dbReference type="GO" id="GO:0019843">
    <property type="term" value="F:rRNA binding"/>
    <property type="evidence" value="ECO:0007669"/>
    <property type="project" value="UniProtKB-KW"/>
</dbReference>
<dbReference type="GO" id="GO:0003735">
    <property type="term" value="F:structural constituent of ribosome"/>
    <property type="evidence" value="ECO:0007669"/>
    <property type="project" value="InterPro"/>
</dbReference>
<dbReference type="GO" id="GO:0006412">
    <property type="term" value="P:translation"/>
    <property type="evidence" value="ECO:0007669"/>
    <property type="project" value="UniProtKB-UniRule"/>
</dbReference>
<dbReference type="Gene3D" id="4.10.830.30">
    <property type="entry name" value="Ribosomal protein L31"/>
    <property type="match status" value="1"/>
</dbReference>
<dbReference type="HAMAP" id="MF_00501">
    <property type="entry name" value="Ribosomal_bL31_1"/>
    <property type="match status" value="1"/>
</dbReference>
<dbReference type="InterPro" id="IPR034704">
    <property type="entry name" value="Ribosomal_bL28/bL31-like_sf"/>
</dbReference>
<dbReference type="InterPro" id="IPR002150">
    <property type="entry name" value="Ribosomal_bL31"/>
</dbReference>
<dbReference type="InterPro" id="IPR027491">
    <property type="entry name" value="Ribosomal_bL31_A"/>
</dbReference>
<dbReference type="InterPro" id="IPR042105">
    <property type="entry name" value="Ribosomal_bL31_sf"/>
</dbReference>
<dbReference type="NCBIfam" id="TIGR00105">
    <property type="entry name" value="L31"/>
    <property type="match status" value="1"/>
</dbReference>
<dbReference type="NCBIfam" id="NF000612">
    <property type="entry name" value="PRK00019.1"/>
    <property type="match status" value="1"/>
</dbReference>
<dbReference type="NCBIfam" id="NF001809">
    <property type="entry name" value="PRK00528.1"/>
    <property type="match status" value="1"/>
</dbReference>
<dbReference type="PANTHER" id="PTHR33280">
    <property type="entry name" value="50S RIBOSOMAL PROTEIN L31, CHLOROPLASTIC"/>
    <property type="match status" value="1"/>
</dbReference>
<dbReference type="PANTHER" id="PTHR33280:SF1">
    <property type="entry name" value="LARGE RIBOSOMAL SUBUNIT PROTEIN BL31C"/>
    <property type="match status" value="1"/>
</dbReference>
<dbReference type="Pfam" id="PF01197">
    <property type="entry name" value="Ribosomal_L31"/>
    <property type="match status" value="1"/>
</dbReference>
<dbReference type="PRINTS" id="PR01249">
    <property type="entry name" value="RIBOSOMALL31"/>
</dbReference>
<dbReference type="SUPFAM" id="SSF143800">
    <property type="entry name" value="L28p-like"/>
    <property type="match status" value="1"/>
</dbReference>
<dbReference type="PROSITE" id="PS01143">
    <property type="entry name" value="RIBOSOMAL_L31"/>
    <property type="match status" value="1"/>
</dbReference>
<comment type="function">
    <text evidence="1">Binds the 23S rRNA.</text>
</comment>
<comment type="subunit">
    <text evidence="1">Part of the 50S ribosomal subunit.</text>
</comment>
<comment type="similarity">
    <text evidence="1">Belongs to the bacterial ribosomal protein bL31 family. Type A subfamily.</text>
</comment>
<evidence type="ECO:0000255" key="1">
    <source>
        <dbReference type="HAMAP-Rule" id="MF_00501"/>
    </source>
</evidence>
<evidence type="ECO:0000305" key="2"/>
<reference key="1">
    <citation type="journal article" date="2007" name="Photosyn. Res.">
        <title>Complete nucleotide sequence of the freshwater unicellular cyanobacterium Synechococcus elongatus PCC 6301 chromosome: gene content and organization.</title>
        <authorList>
            <person name="Sugita C."/>
            <person name="Ogata K."/>
            <person name="Shikata M."/>
            <person name="Jikuya H."/>
            <person name="Takano J."/>
            <person name="Furumichi M."/>
            <person name="Kanehisa M."/>
            <person name="Omata T."/>
            <person name="Sugiura M."/>
            <person name="Sugita M."/>
        </authorList>
    </citation>
    <scope>NUCLEOTIDE SEQUENCE [LARGE SCALE GENOMIC DNA]</scope>
    <source>
        <strain>ATCC 27144 / PCC 6301 / SAUG 1402/1</strain>
    </source>
</reference>
<proteinExistence type="inferred from homology"/>
<feature type="chain" id="PRO_0000173166" description="Large ribosomal subunit protein bL31">
    <location>
        <begin position="1"/>
        <end position="77"/>
    </location>
</feature>
<protein>
    <recommendedName>
        <fullName evidence="1">Large ribosomal subunit protein bL31</fullName>
    </recommendedName>
    <alternativeName>
        <fullName evidence="2">50S ribosomal protein L31</fullName>
    </alternativeName>
</protein>
<name>RL31_SYNP6</name>